<gene>
    <name type="primary">soxA</name>
    <name type="ordered locus">R00083</name>
    <name type="ORF">SMc02606</name>
</gene>
<feature type="chain" id="PRO_0000122628" description="Sarcosine oxidase subunit alpha">
    <location>
        <begin position="1"/>
        <end position="987"/>
    </location>
</feature>
<feature type="binding site" evidence="2">
    <location>
        <position position="198"/>
    </location>
    <ligand>
        <name>NAD(+)</name>
        <dbReference type="ChEBI" id="CHEBI:57540"/>
    </ligand>
</feature>
<feature type="binding site" evidence="2">
    <location>
        <position position="199"/>
    </location>
    <ligand>
        <name>NAD(+)</name>
        <dbReference type="ChEBI" id="CHEBI:57540"/>
    </ligand>
</feature>
<feature type="binding site" evidence="2">
    <location>
        <position position="206"/>
    </location>
    <ligand>
        <name>NAD(+)</name>
        <dbReference type="ChEBI" id="CHEBI:57540"/>
    </ligand>
</feature>
<feature type="binding site" evidence="2">
    <location>
        <position position="244"/>
    </location>
    <ligand>
        <name>NAD(+)</name>
        <dbReference type="ChEBI" id="CHEBI:57540"/>
    </ligand>
</feature>
<feature type="binding site" evidence="2">
    <location>
        <position position="445"/>
    </location>
    <ligand>
        <name>NAD(+)</name>
        <dbReference type="ChEBI" id="CHEBI:57540"/>
    </ligand>
</feature>
<feature type="binding site" evidence="2">
    <location>
        <position position="714"/>
    </location>
    <ligand>
        <name>(6R)-5,10-methylene-5,6,7,8-tetrahydrofolate</name>
        <dbReference type="ChEBI" id="CHEBI:15636"/>
    </ligand>
</feature>
<feature type="binding site" evidence="2">
    <location>
        <position position="806"/>
    </location>
    <ligand>
        <name>(6R)-5,10-methylene-5,6,7,8-tetrahydrofolate</name>
        <dbReference type="ChEBI" id="CHEBI:15636"/>
    </ligand>
</feature>
<comment type="function">
    <text evidence="1">In the presence of tetrahydrofolate, catalyzes the oxidative demethylation of sarcosine to yield glycine, 5,10-methylenetetrahydrofolate and hydrogen peroxide (By similarity). In the absence of tetrahydrofolate, catalyzes the oxidative demethylation of sarcosine to yield glycine, formaldehyde and hydrogen peroxide (By similarity).</text>
</comment>
<comment type="catalytic activity">
    <reaction evidence="1">
        <text>sarcosine + (6S)-5,6,7,8-tetrahydrofolate + O2 = (6R)-5,10-methylene-5,6,7,8-tetrahydrofolate + glycine + H2O2</text>
        <dbReference type="Rhea" id="RHEA:70455"/>
        <dbReference type="ChEBI" id="CHEBI:15379"/>
        <dbReference type="ChEBI" id="CHEBI:15636"/>
        <dbReference type="ChEBI" id="CHEBI:16240"/>
        <dbReference type="ChEBI" id="CHEBI:57305"/>
        <dbReference type="ChEBI" id="CHEBI:57433"/>
        <dbReference type="ChEBI" id="CHEBI:57453"/>
        <dbReference type="EC" id="1.5.3.24"/>
    </reaction>
</comment>
<comment type="catalytic activity">
    <reaction evidence="1">
        <text>sarcosine + O2 + H2O = formaldehyde + glycine + H2O2</text>
        <dbReference type="Rhea" id="RHEA:13313"/>
        <dbReference type="ChEBI" id="CHEBI:15377"/>
        <dbReference type="ChEBI" id="CHEBI:15379"/>
        <dbReference type="ChEBI" id="CHEBI:16240"/>
        <dbReference type="ChEBI" id="CHEBI:16842"/>
        <dbReference type="ChEBI" id="CHEBI:57305"/>
        <dbReference type="ChEBI" id="CHEBI:57433"/>
    </reaction>
</comment>
<comment type="cofactor">
    <cofactor evidence="1">
        <name>NAD(+)</name>
        <dbReference type="ChEBI" id="CHEBI:57540"/>
    </cofactor>
    <text evidence="1">Binds 1 NAD(+) per subunit.</text>
</comment>
<comment type="subunit">
    <text evidence="1">Heterotetramer composed of subunits alpha (SoxA), beta (SoxB), gamma (SoxG) and delta (SoxD).</text>
</comment>
<comment type="subcellular location">
    <subcellularLocation>
        <location evidence="1">Cytoplasm</location>
    </subcellularLocation>
</comment>
<comment type="similarity">
    <text evidence="3">Belongs to the GcvT family.</text>
</comment>
<proteinExistence type="inferred from homology"/>
<reference key="1">
    <citation type="journal article" date="2001" name="Proc. Natl. Acad. Sci. U.S.A.">
        <title>Analysis of the chromosome sequence of the legume symbiont Sinorhizobium meliloti strain 1021.</title>
        <authorList>
            <person name="Capela D."/>
            <person name="Barloy-Hubler F."/>
            <person name="Gouzy J."/>
            <person name="Bothe G."/>
            <person name="Ampe F."/>
            <person name="Batut J."/>
            <person name="Boistard P."/>
            <person name="Becker A."/>
            <person name="Boutry M."/>
            <person name="Cadieu E."/>
            <person name="Dreano S."/>
            <person name="Gloux S."/>
            <person name="Godrie T."/>
            <person name="Goffeau A."/>
            <person name="Kahn D."/>
            <person name="Kiss E."/>
            <person name="Lelaure V."/>
            <person name="Masuy D."/>
            <person name="Pohl T."/>
            <person name="Portetelle D."/>
            <person name="Puehler A."/>
            <person name="Purnelle B."/>
            <person name="Ramsperger U."/>
            <person name="Renard C."/>
            <person name="Thebault P."/>
            <person name="Vandenbol M."/>
            <person name="Weidner S."/>
            <person name="Galibert F."/>
        </authorList>
    </citation>
    <scope>NUCLEOTIDE SEQUENCE [LARGE SCALE GENOMIC DNA]</scope>
    <source>
        <strain>1021</strain>
    </source>
</reference>
<reference key="2">
    <citation type="journal article" date="2001" name="Science">
        <title>The composite genome of the legume symbiont Sinorhizobium meliloti.</title>
        <authorList>
            <person name="Galibert F."/>
            <person name="Finan T.M."/>
            <person name="Long S.R."/>
            <person name="Puehler A."/>
            <person name="Abola P."/>
            <person name="Ampe F."/>
            <person name="Barloy-Hubler F."/>
            <person name="Barnett M.J."/>
            <person name="Becker A."/>
            <person name="Boistard P."/>
            <person name="Bothe G."/>
            <person name="Boutry M."/>
            <person name="Bowser L."/>
            <person name="Buhrmester J."/>
            <person name="Cadieu E."/>
            <person name="Capela D."/>
            <person name="Chain P."/>
            <person name="Cowie A."/>
            <person name="Davis R.W."/>
            <person name="Dreano S."/>
            <person name="Federspiel N.A."/>
            <person name="Fisher R.F."/>
            <person name="Gloux S."/>
            <person name="Godrie T."/>
            <person name="Goffeau A."/>
            <person name="Golding B."/>
            <person name="Gouzy J."/>
            <person name="Gurjal M."/>
            <person name="Hernandez-Lucas I."/>
            <person name="Hong A."/>
            <person name="Huizar L."/>
            <person name="Hyman R.W."/>
            <person name="Jones T."/>
            <person name="Kahn D."/>
            <person name="Kahn M.L."/>
            <person name="Kalman S."/>
            <person name="Keating D.H."/>
            <person name="Kiss E."/>
            <person name="Komp C."/>
            <person name="Lelaure V."/>
            <person name="Masuy D."/>
            <person name="Palm C."/>
            <person name="Peck M.C."/>
            <person name="Pohl T.M."/>
            <person name="Portetelle D."/>
            <person name="Purnelle B."/>
            <person name="Ramsperger U."/>
            <person name="Surzycki R."/>
            <person name="Thebault P."/>
            <person name="Vandenbol M."/>
            <person name="Vorhoelter F.J."/>
            <person name="Weidner S."/>
            <person name="Wells D.H."/>
            <person name="Wong K."/>
            <person name="Yeh K.-C."/>
            <person name="Batut J."/>
        </authorList>
    </citation>
    <scope>NUCLEOTIDE SEQUENCE [LARGE SCALE GENOMIC DNA]</scope>
    <source>
        <strain>1021</strain>
    </source>
</reference>
<reference key="3">
    <citation type="submission" date="1998-03" db="EMBL/GenBank/DDBJ databases">
        <authorList>
            <person name="Powers E.L."/>
            <person name="Vuyyuru V."/>
            <person name="Kahn M.L."/>
        </authorList>
    </citation>
    <scope>NUCLEOTIDE SEQUENCE [GENOMIC DNA] OF 1-59</scope>
    <source>
        <strain>1021</strain>
    </source>
</reference>
<evidence type="ECO:0000250" key="1">
    <source>
        <dbReference type="UniProtKB" id="Q46337"/>
    </source>
</evidence>
<evidence type="ECO:0000250" key="2">
    <source>
        <dbReference type="UniProtKB" id="Q50LF0"/>
    </source>
</evidence>
<evidence type="ECO:0000305" key="3"/>
<dbReference type="EC" id="1.5.3.24" evidence="1"/>
<dbReference type="EMBL" id="AL591688">
    <property type="protein sequence ID" value="CAC41470.1"/>
    <property type="molecule type" value="Genomic_DNA"/>
</dbReference>
<dbReference type="EMBL" id="AF055582">
    <property type="protein sequence ID" value="AAC62216.1"/>
    <property type="molecule type" value="Genomic_DNA"/>
</dbReference>
<dbReference type="RefSeq" id="NP_384189.1">
    <property type="nucleotide sequence ID" value="NC_003047.1"/>
</dbReference>
<dbReference type="RefSeq" id="WP_010968344.1">
    <property type="nucleotide sequence ID" value="NC_003047.1"/>
</dbReference>
<dbReference type="SMR" id="O87386"/>
<dbReference type="EnsemblBacteria" id="CAC41470">
    <property type="protein sequence ID" value="CAC41470"/>
    <property type="gene ID" value="SMc02606"/>
</dbReference>
<dbReference type="KEGG" id="sme:SMc02606"/>
<dbReference type="PATRIC" id="fig|266834.11.peg.1440"/>
<dbReference type="eggNOG" id="COG0404">
    <property type="taxonomic scope" value="Bacteria"/>
</dbReference>
<dbReference type="eggNOG" id="COG0446">
    <property type="taxonomic scope" value="Bacteria"/>
</dbReference>
<dbReference type="HOGENOM" id="CLU_011963_0_0_5"/>
<dbReference type="OrthoDB" id="5287468at2"/>
<dbReference type="Proteomes" id="UP000001976">
    <property type="component" value="Chromosome"/>
</dbReference>
<dbReference type="GO" id="GO:0005737">
    <property type="term" value="C:cytoplasm"/>
    <property type="evidence" value="ECO:0007669"/>
    <property type="project" value="UniProtKB-SubCell"/>
</dbReference>
<dbReference type="GO" id="GO:0000166">
    <property type="term" value="F:nucleotide binding"/>
    <property type="evidence" value="ECO:0007669"/>
    <property type="project" value="UniProtKB-KW"/>
</dbReference>
<dbReference type="GO" id="GO:0008115">
    <property type="term" value="F:sarcosine oxidase activity"/>
    <property type="evidence" value="ECO:0007669"/>
    <property type="project" value="UniProtKB-EC"/>
</dbReference>
<dbReference type="GO" id="GO:0046653">
    <property type="term" value="P:tetrahydrofolate metabolic process"/>
    <property type="evidence" value="ECO:0007669"/>
    <property type="project" value="InterPro"/>
</dbReference>
<dbReference type="Gene3D" id="3.10.20.440">
    <property type="entry name" value="2Fe-2S iron-sulphur cluster binding domain, sarcosine oxidase, alpha subunit, N-terminal domain"/>
    <property type="match status" value="1"/>
</dbReference>
<dbReference type="Gene3D" id="3.50.50.60">
    <property type="entry name" value="FAD/NAD(P)-binding domain"/>
    <property type="match status" value="1"/>
</dbReference>
<dbReference type="Gene3D" id="3.30.1360.120">
    <property type="entry name" value="Probable tRNA modification gtpase trme, domain 1"/>
    <property type="match status" value="1"/>
</dbReference>
<dbReference type="InterPro" id="IPR042204">
    <property type="entry name" value="2Fe-2S-bd_N"/>
</dbReference>
<dbReference type="InterPro" id="IPR036188">
    <property type="entry name" value="FAD/NAD-bd_sf"/>
</dbReference>
<dbReference type="InterPro" id="IPR023753">
    <property type="entry name" value="FAD/NAD-binding_dom"/>
</dbReference>
<dbReference type="InterPro" id="IPR013977">
    <property type="entry name" value="GCST_C"/>
</dbReference>
<dbReference type="InterPro" id="IPR006222">
    <property type="entry name" value="GCV_T_N"/>
</dbReference>
<dbReference type="InterPro" id="IPR028896">
    <property type="entry name" value="GcvT/YgfZ/DmdA"/>
</dbReference>
<dbReference type="InterPro" id="IPR029043">
    <property type="entry name" value="GcvT/YgfZ_C"/>
</dbReference>
<dbReference type="InterPro" id="IPR006277">
    <property type="entry name" value="Sarcosine_oxidase_asu"/>
</dbReference>
<dbReference type="InterPro" id="IPR041117">
    <property type="entry name" value="SoxA_A3"/>
</dbReference>
<dbReference type="InterPro" id="IPR027266">
    <property type="entry name" value="TrmE/GcvT_dom1"/>
</dbReference>
<dbReference type="NCBIfam" id="TIGR01372">
    <property type="entry name" value="soxA"/>
    <property type="match status" value="1"/>
</dbReference>
<dbReference type="PANTHER" id="PTHR43757">
    <property type="entry name" value="AMINOMETHYLTRANSFERASE"/>
    <property type="match status" value="1"/>
</dbReference>
<dbReference type="PANTHER" id="PTHR43757:SF2">
    <property type="entry name" value="AMINOMETHYLTRANSFERASE, MITOCHONDRIAL"/>
    <property type="match status" value="1"/>
</dbReference>
<dbReference type="Pfam" id="PF13510">
    <property type="entry name" value="Fer2_4"/>
    <property type="match status" value="1"/>
</dbReference>
<dbReference type="Pfam" id="PF01571">
    <property type="entry name" value="GCV_T"/>
    <property type="match status" value="1"/>
</dbReference>
<dbReference type="Pfam" id="PF08669">
    <property type="entry name" value="GCV_T_C"/>
    <property type="match status" value="1"/>
</dbReference>
<dbReference type="Pfam" id="PF07992">
    <property type="entry name" value="Pyr_redox_2"/>
    <property type="match status" value="1"/>
</dbReference>
<dbReference type="Pfam" id="PF17806">
    <property type="entry name" value="SO_alpha_A3"/>
    <property type="match status" value="1"/>
</dbReference>
<dbReference type="PIRSF" id="PIRSF037980">
    <property type="entry name" value="SoxA"/>
    <property type="match status" value="1"/>
</dbReference>
<dbReference type="PRINTS" id="PR00368">
    <property type="entry name" value="FADPNR"/>
</dbReference>
<dbReference type="PRINTS" id="PR00411">
    <property type="entry name" value="PNDRDTASEI"/>
</dbReference>
<dbReference type="SUPFAM" id="SSF101790">
    <property type="entry name" value="Aminomethyltransferase beta-barrel domain"/>
    <property type="match status" value="1"/>
</dbReference>
<dbReference type="SUPFAM" id="SSF51905">
    <property type="entry name" value="FAD/NAD(P)-binding domain"/>
    <property type="match status" value="1"/>
</dbReference>
<dbReference type="SUPFAM" id="SSF103025">
    <property type="entry name" value="Folate-binding domain"/>
    <property type="match status" value="1"/>
</dbReference>
<keyword id="KW-0963">Cytoplasm</keyword>
<keyword id="KW-0520">NAD</keyword>
<keyword id="KW-0547">Nucleotide-binding</keyword>
<keyword id="KW-0560">Oxidoreductase</keyword>
<keyword id="KW-1185">Reference proteome</keyword>
<organism>
    <name type="scientific">Rhizobium meliloti (strain 1021)</name>
    <name type="common">Ensifer meliloti</name>
    <name type="synonym">Sinorhizobium meliloti</name>
    <dbReference type="NCBI Taxonomy" id="266834"/>
    <lineage>
        <taxon>Bacteria</taxon>
        <taxon>Pseudomonadati</taxon>
        <taxon>Pseudomonadota</taxon>
        <taxon>Alphaproteobacteria</taxon>
        <taxon>Hyphomicrobiales</taxon>
        <taxon>Rhizobiaceae</taxon>
        <taxon>Sinorhizobium/Ensifer group</taxon>
        <taxon>Sinorhizobium</taxon>
    </lineage>
</organism>
<accession>O87386</accession>
<sequence>MSSYRLPKRGLVDRNVPLSFTFDGRPMQGLEGDTLASALLANGRMLVGRSFKYHRPRGILTAGAAEPNALVTVGRGGRAEPNTRATMQELYEGLEARSQNRWPSLAFDIGALNGLLSPFLGAGFYYKTFMWPAPLWEKLYEPVIRRAAGLGKASYEADPDAYEKSWAHCDLLVIGAGPTGLAAALTAGRAGARVILVDEGSLPGGSLLSDTATIDGKAAADFARDTSDELRSMPNVQVLVRTTAFGWYDGNVFGAVERVQKHVREPASHLPVERLWRIVAGKALLATGAEERPLVFGGNDRPGVMMAGAMRAYLNRYGVAPGRTPAIFTTNDTGYTLAQELEAAGVDVVAIVDSRPAAGVDYRGKARLVREAVVCGTKGGKAISAIEVHHGGRTETIAVDALAMAGGFDPIIHLACHRGGKPVWSAEKAAFLAPGSLKGLEVAGGAAATTGLAACLGEGAARAEAIVRELGLPCPPVAVVKVESEEGIRSPAPLWSIPGIKDKAFVDFQNDVHLKDIGLAVREGYSHVELAKRYTTSGMATDQGKLSNVNAIGLIAKARGVSPAEVGTTTFRPFYTPVSFGALTGAHTGHHFQPVRKSPLHDWAKKHGAVFVETGLWYRSSWFPRSGERTWRESVEREVLNVRKNAGLCDVSMLGKIEITGSDAAEFLNRVYCNAFLKLPVGKARYGLMLREDGFIYDDGTTSRLEENRFFMTTTTAYAAGVMNHLEFCAQVLWPQLDVRLASITDQWAQMAIAGPKARMILQKIVDEDISDAAFPFLAAKEVSLFGGALHGCLFRISFSGELAYELAVPAGYGESIADALLEAGKDHGIMPYGVETLSVLRIEKGHVTHNEINGTIVPADLGFGKMVSAGKPDFVGKAMLQREGLTAPDRPQLVGVVPLDPQQSFRSGSHILAKGAAATLENDEGYVTSSAYSPHVGSTIALALVRNGRNRHGEEVLVWSGLHGESTPARLCNPVFFDPQNERLHV</sequence>
<name>TSOXA_RHIME</name>
<protein>
    <recommendedName>
        <fullName evidence="1">Sarcosine oxidase subunit alpha</fullName>
        <shortName evidence="1">Sarcosine oxidase subunit A</shortName>
        <ecNumber evidence="1">1.5.3.24</ecNumber>
    </recommendedName>
    <alternativeName>
        <fullName evidence="1">Sarcosine oxidase (5,10-methylenetetrahydrofolate-forming) subunit alpha</fullName>
    </alternativeName>
    <alternativeName>
        <fullName evidence="1">Tetrameric sarcosine oxidase subunit alpha</fullName>
        <shortName evidence="1">TSOX subunit alpha</shortName>
    </alternativeName>
</protein>